<feature type="chain" id="PRO_0000288717" description="Cytosolic Fe-S cluster assembly factor NUBP2">
    <location>
        <begin position="1"/>
        <end position="271"/>
    </location>
</feature>
<feature type="binding site" evidence="3">
    <location>
        <begin position="22"/>
        <end position="29"/>
    </location>
    <ligand>
        <name>ATP</name>
        <dbReference type="ChEBI" id="CHEBI:30616"/>
    </ligand>
</feature>
<feature type="binding site" evidence="3">
    <location>
        <position position="196"/>
    </location>
    <ligand>
        <name>[4Fe-4S] cluster</name>
        <dbReference type="ChEBI" id="CHEBI:49883"/>
        <note>ligand shared between dimeric partners</note>
    </ligand>
</feature>
<feature type="binding site" evidence="3">
    <location>
        <position position="199"/>
    </location>
    <ligand>
        <name>[4Fe-4S] cluster</name>
        <dbReference type="ChEBI" id="CHEBI:49883"/>
        <note>ligand shared between dimeric partners</note>
    </ligand>
</feature>
<feature type="modified residue" description="N-acetylmethionine" evidence="2 3">
    <location>
        <position position="1"/>
    </location>
</feature>
<proteinExistence type="evidence at protein level"/>
<accession>Q68FS1</accession>
<organism>
    <name type="scientific">Rattus norvegicus</name>
    <name type="common">Rat</name>
    <dbReference type="NCBI Taxonomy" id="10116"/>
    <lineage>
        <taxon>Eukaryota</taxon>
        <taxon>Metazoa</taxon>
        <taxon>Chordata</taxon>
        <taxon>Craniata</taxon>
        <taxon>Vertebrata</taxon>
        <taxon>Euteleostomi</taxon>
        <taxon>Mammalia</taxon>
        <taxon>Eutheria</taxon>
        <taxon>Euarchontoglires</taxon>
        <taxon>Glires</taxon>
        <taxon>Rodentia</taxon>
        <taxon>Myomorpha</taxon>
        <taxon>Muroidea</taxon>
        <taxon>Muridae</taxon>
        <taxon>Murinae</taxon>
        <taxon>Rattus</taxon>
    </lineage>
</organism>
<protein>
    <recommendedName>
        <fullName evidence="3">Cytosolic Fe-S cluster assembly factor NUBP2</fullName>
    </recommendedName>
    <alternativeName>
        <fullName evidence="3">Nucleotide-binding protein 2</fullName>
        <shortName evidence="3">NBP 2</shortName>
    </alternativeName>
</protein>
<dbReference type="EMBL" id="BC079386">
    <property type="protein sequence ID" value="AAH79386.1"/>
    <property type="molecule type" value="mRNA"/>
</dbReference>
<dbReference type="RefSeq" id="NP_001011891.1">
    <property type="nucleotide sequence ID" value="NM_001011891.1"/>
</dbReference>
<dbReference type="SMR" id="Q68FS1"/>
<dbReference type="FunCoup" id="Q68FS1">
    <property type="interactions" value="908"/>
</dbReference>
<dbReference type="STRING" id="10116.ENSRNOP00000020504"/>
<dbReference type="PhosphoSitePlus" id="Q68FS1"/>
<dbReference type="jPOST" id="Q68FS1"/>
<dbReference type="PaxDb" id="10116-ENSRNOP00000020504"/>
<dbReference type="Ensembl" id="ENSRNOT00000020504.7">
    <property type="protein sequence ID" value="ENSRNOP00000020504.3"/>
    <property type="gene ID" value="ENSRNOG00000015090.7"/>
</dbReference>
<dbReference type="GeneID" id="287125"/>
<dbReference type="KEGG" id="rno:287125"/>
<dbReference type="UCSC" id="RGD:1305113">
    <property type="organism name" value="rat"/>
</dbReference>
<dbReference type="AGR" id="RGD:1305113"/>
<dbReference type="CTD" id="10101"/>
<dbReference type="RGD" id="1305113">
    <property type="gene designation" value="Nubp2"/>
</dbReference>
<dbReference type="eggNOG" id="KOG3022">
    <property type="taxonomic scope" value="Eukaryota"/>
</dbReference>
<dbReference type="GeneTree" id="ENSGT00950000183193"/>
<dbReference type="HOGENOM" id="CLU_024839_0_1_1"/>
<dbReference type="InParanoid" id="Q68FS1"/>
<dbReference type="OMA" id="WIPVFAD"/>
<dbReference type="OrthoDB" id="1741334at2759"/>
<dbReference type="PhylomeDB" id="Q68FS1"/>
<dbReference type="TreeFam" id="TF354321"/>
<dbReference type="PRO" id="PR:Q68FS1"/>
<dbReference type="Proteomes" id="UP000002494">
    <property type="component" value="Chromosome 10"/>
</dbReference>
<dbReference type="Bgee" id="ENSRNOG00000015090">
    <property type="expression patterns" value="Expressed in thymus and 19 other cell types or tissues"/>
</dbReference>
<dbReference type="GO" id="GO:0005814">
    <property type="term" value="C:centriole"/>
    <property type="evidence" value="ECO:0007669"/>
    <property type="project" value="UniProtKB-SubCell"/>
</dbReference>
<dbReference type="GO" id="GO:0005929">
    <property type="term" value="C:cilium"/>
    <property type="evidence" value="ECO:0007669"/>
    <property type="project" value="UniProtKB-KW"/>
</dbReference>
<dbReference type="GO" id="GO:0005829">
    <property type="term" value="C:cytosol"/>
    <property type="evidence" value="ECO:0000318"/>
    <property type="project" value="GO_Central"/>
</dbReference>
<dbReference type="GO" id="GO:0005634">
    <property type="term" value="C:nucleus"/>
    <property type="evidence" value="ECO:0000266"/>
    <property type="project" value="RGD"/>
</dbReference>
<dbReference type="GO" id="GO:0031616">
    <property type="term" value="C:spindle pole centrosome"/>
    <property type="evidence" value="ECO:0000266"/>
    <property type="project" value="RGD"/>
</dbReference>
<dbReference type="GO" id="GO:0051539">
    <property type="term" value="F:4 iron, 4 sulfur cluster binding"/>
    <property type="evidence" value="ECO:0007669"/>
    <property type="project" value="UniProtKB-UniRule"/>
</dbReference>
<dbReference type="GO" id="GO:0005524">
    <property type="term" value="F:ATP binding"/>
    <property type="evidence" value="ECO:0007669"/>
    <property type="project" value="UniProtKB-KW"/>
</dbReference>
<dbReference type="GO" id="GO:0140663">
    <property type="term" value="F:ATP-dependent FeS chaperone activity"/>
    <property type="evidence" value="ECO:0007669"/>
    <property type="project" value="InterPro"/>
</dbReference>
<dbReference type="GO" id="GO:0051536">
    <property type="term" value="F:iron-sulfur cluster binding"/>
    <property type="evidence" value="ECO:0000318"/>
    <property type="project" value="GO_Central"/>
</dbReference>
<dbReference type="GO" id="GO:0046872">
    <property type="term" value="F:metal ion binding"/>
    <property type="evidence" value="ECO:0007669"/>
    <property type="project" value="UniProtKB-KW"/>
</dbReference>
<dbReference type="GO" id="GO:0030030">
    <property type="term" value="P:cell projection organization"/>
    <property type="evidence" value="ECO:0007669"/>
    <property type="project" value="UniProtKB-KW"/>
</dbReference>
<dbReference type="GO" id="GO:0016226">
    <property type="term" value="P:iron-sulfur cluster assembly"/>
    <property type="evidence" value="ECO:0000318"/>
    <property type="project" value="GO_Central"/>
</dbReference>
<dbReference type="CDD" id="cd02037">
    <property type="entry name" value="Mrp_NBP35"/>
    <property type="match status" value="1"/>
</dbReference>
<dbReference type="FunFam" id="3.40.50.300:FF:000796">
    <property type="entry name" value="Cytosolic Fe-S cluster assembly factor NUBP2"/>
    <property type="match status" value="1"/>
</dbReference>
<dbReference type="Gene3D" id="3.40.50.300">
    <property type="entry name" value="P-loop containing nucleotide triphosphate hydrolases"/>
    <property type="match status" value="1"/>
</dbReference>
<dbReference type="HAMAP" id="MF_02040">
    <property type="entry name" value="Mrp_NBP35"/>
    <property type="match status" value="1"/>
</dbReference>
<dbReference type="HAMAP" id="MF_03039">
    <property type="entry name" value="NUBP2"/>
    <property type="match status" value="1"/>
</dbReference>
<dbReference type="InterPro" id="IPR000808">
    <property type="entry name" value="Mrp-like_CS"/>
</dbReference>
<dbReference type="InterPro" id="IPR019591">
    <property type="entry name" value="Mrp/NBP35_ATP-bd"/>
</dbReference>
<dbReference type="InterPro" id="IPR028600">
    <property type="entry name" value="NUBP2/Cfd1_eukaryotes"/>
</dbReference>
<dbReference type="InterPro" id="IPR027417">
    <property type="entry name" value="P-loop_NTPase"/>
</dbReference>
<dbReference type="InterPro" id="IPR033756">
    <property type="entry name" value="YlxH/NBP35"/>
</dbReference>
<dbReference type="PANTHER" id="PTHR23264:SF19">
    <property type="entry name" value="CYTOSOLIC FE-S CLUSTER ASSEMBLY FACTOR NUBP2"/>
    <property type="match status" value="1"/>
</dbReference>
<dbReference type="PANTHER" id="PTHR23264">
    <property type="entry name" value="NUCLEOTIDE-BINDING PROTEIN NBP35 YEAST -RELATED"/>
    <property type="match status" value="1"/>
</dbReference>
<dbReference type="Pfam" id="PF10609">
    <property type="entry name" value="ParA"/>
    <property type="match status" value="1"/>
</dbReference>
<dbReference type="SUPFAM" id="SSF52540">
    <property type="entry name" value="P-loop containing nucleoside triphosphate hydrolases"/>
    <property type="match status" value="1"/>
</dbReference>
<dbReference type="PROSITE" id="PS01215">
    <property type="entry name" value="MRP"/>
    <property type="match status" value="1"/>
</dbReference>
<comment type="function">
    <text evidence="1 3">Component of the cytosolic iron-sulfur (Fe/S) protein assembly (CIA) machinery. Required for maturation of extramitochondrial Fe-S proteins. The NUBP1-NUBP2 heterotetramer forms a Fe-S scaffold complex, mediating the de novo assembly of an Fe-S cluster and its transfer to target apoproteins. Negatively regulates cilium formation and structure.</text>
</comment>
<comment type="cofactor">
    <cofactor evidence="3">
        <name>[4Fe-4S] cluster</name>
        <dbReference type="ChEBI" id="CHEBI:49883"/>
    </cofactor>
    <text evidence="3">Binds 4 [4Fe-4S] clusters per heterotetramer. Contains two stable clusters in the N-termini of NUBP1 and two labile, bridging clusters between subunits of the NUBP1-NUBP2 heterotetramer.</text>
</comment>
<comment type="subunit">
    <text evidence="1 3">Heterotetramer of 2 NUBP1 and 2 NUBP2 chains. Interacts with KIFC1. Interacts with NUBP1.</text>
</comment>
<comment type="subcellular location">
    <subcellularLocation>
        <location evidence="3">Nucleus</location>
    </subcellularLocation>
    <subcellularLocation>
        <location evidence="3">Cytoplasm</location>
        <location evidence="3">Cytoskeleton</location>
        <location evidence="3">Microtubule organizing center</location>
        <location evidence="3">Centrosome</location>
    </subcellularLocation>
    <subcellularLocation>
        <location evidence="1">Cytoplasm</location>
    </subcellularLocation>
    <subcellularLocation>
        <location evidence="1">Cytoplasm</location>
        <location evidence="1">Cytoskeleton</location>
        <location evidence="1">Cilium axoneme</location>
    </subcellularLocation>
    <subcellularLocation>
        <location evidence="1">Cytoplasm</location>
        <location evidence="1">Cytoskeleton</location>
        <location evidence="1">Microtubule organizing center</location>
        <location evidence="1">Centrosome</location>
        <location evidence="1">Centriole</location>
    </subcellularLocation>
    <subcellularLocation>
        <location evidence="1">Cytoplasm</location>
        <location evidence="1">Cytoskeleton</location>
        <location evidence="1">Microtubule organizing center</location>
    </subcellularLocation>
    <text evidence="1 3">Enriched at the centrosomes during mitosis. Enriched in centrioles of microtubule asters during prophase, prometaphase and telophase stages of mitosis (By similarity). Localized at centrioles and in the nucleus at interphase (By similarity). Colocalizes with nubp-1 at prometaphase (By similarity).</text>
</comment>
<comment type="similarity">
    <text evidence="3">Belongs to the Mrp/NBP35 ATP-binding proteins family. NUBP2/CFD1 subfamily.</text>
</comment>
<gene>
    <name type="primary">Nubp2</name>
</gene>
<keyword id="KW-0004">4Fe-4S</keyword>
<keyword id="KW-0007">Acetylation</keyword>
<keyword id="KW-0067">ATP-binding</keyword>
<keyword id="KW-0966">Cell projection</keyword>
<keyword id="KW-0969">Cilium</keyword>
<keyword id="KW-0970">Cilium biogenesis/degradation</keyword>
<keyword id="KW-0963">Cytoplasm</keyword>
<keyword id="KW-0206">Cytoskeleton</keyword>
<keyword id="KW-0903">Direct protein sequencing</keyword>
<keyword id="KW-0408">Iron</keyword>
<keyword id="KW-0411">Iron-sulfur</keyword>
<keyword id="KW-0479">Metal-binding</keyword>
<keyword id="KW-0547">Nucleotide-binding</keyword>
<keyword id="KW-0539">Nucleus</keyword>
<keyword id="KW-1185">Reference proteome</keyword>
<evidence type="ECO:0000250" key="1">
    <source>
        <dbReference type="UniProtKB" id="Q9R061"/>
    </source>
</evidence>
<evidence type="ECO:0000250" key="2">
    <source>
        <dbReference type="UniProtKB" id="Q9Y5Y2"/>
    </source>
</evidence>
<evidence type="ECO:0000255" key="3">
    <source>
        <dbReference type="HAMAP-Rule" id="MF_03039"/>
    </source>
</evidence>
<name>NUBP2_RAT</name>
<sequence length="271" mass="28926">MEAAAEPGNLAGVRHIILVLSGKGGVGKSTISTELALALRHQGKKVGILDVDLCGPSIPHMLHAQGKAVHQCDSGWVPVFVDQEQSISLMSVGFLLENPDEAVVWRGPKKHALIKQFVSDVAWGELDYLVVDTPPGTSDEHMATVEALRPYKPLGALVVTTPQAVSIGDVRRELTFCKKTGLQVIGVIENMSGFACPHCAECTNVFSSGGGEELARLAGVPFLGSVPLDPQLTRSLEEGRDFIQEFPKSTAYSALTSIAHKVLHQMPALCS</sequence>
<reference key="1">
    <citation type="journal article" date="2004" name="Genome Res.">
        <title>The status, quality, and expansion of the NIH full-length cDNA project: the Mammalian Gene Collection (MGC).</title>
        <authorList>
            <consortium name="The MGC Project Team"/>
        </authorList>
    </citation>
    <scope>NUCLEOTIDE SEQUENCE [LARGE SCALE MRNA]</scope>
    <source>
        <tissue>Testis</tissue>
    </source>
</reference>
<reference key="2">
    <citation type="submission" date="2007-04" db="UniProtKB">
        <authorList>
            <person name="Lubec G."/>
            <person name="Chen W.-Q."/>
        </authorList>
    </citation>
    <scope>PROTEIN SEQUENCE OF 15-23; 29-40 AND 249-261</scope>
    <scope>IDENTIFICATION BY MASS SPECTROMETRY</scope>
    <source>
        <strain>Sprague-Dawley</strain>
        <tissue>Hippocampus</tissue>
    </source>
</reference>